<reference key="1">
    <citation type="submission" date="2008-06" db="EMBL/GenBank/DDBJ databases">
        <title>Complete sequence of Chloroherpeton thalassium ATCC 35110.</title>
        <authorList>
            <consortium name="US DOE Joint Genome Institute"/>
            <person name="Lucas S."/>
            <person name="Copeland A."/>
            <person name="Lapidus A."/>
            <person name="Glavina del Rio T."/>
            <person name="Dalin E."/>
            <person name="Tice H."/>
            <person name="Bruce D."/>
            <person name="Goodwin L."/>
            <person name="Pitluck S."/>
            <person name="Schmutz J."/>
            <person name="Larimer F."/>
            <person name="Land M."/>
            <person name="Hauser L."/>
            <person name="Kyrpides N."/>
            <person name="Mikhailova N."/>
            <person name="Liu Z."/>
            <person name="Li T."/>
            <person name="Zhao F."/>
            <person name="Overmann J."/>
            <person name="Bryant D.A."/>
            <person name="Richardson P."/>
        </authorList>
    </citation>
    <scope>NUCLEOTIDE SEQUENCE [LARGE SCALE GENOMIC DNA]</scope>
    <source>
        <strain>ATCC 35110 / GB-78</strain>
    </source>
</reference>
<dbReference type="EC" id="2.7.4.3" evidence="1"/>
<dbReference type="EMBL" id="CP001100">
    <property type="protein sequence ID" value="ACF13986.1"/>
    <property type="molecule type" value="Genomic_DNA"/>
</dbReference>
<dbReference type="RefSeq" id="WP_012500070.1">
    <property type="nucleotide sequence ID" value="NC_011026.1"/>
</dbReference>
<dbReference type="SMR" id="B3QS41"/>
<dbReference type="STRING" id="517418.Ctha_1527"/>
<dbReference type="KEGG" id="cts:Ctha_1527"/>
<dbReference type="eggNOG" id="COG0563">
    <property type="taxonomic scope" value="Bacteria"/>
</dbReference>
<dbReference type="HOGENOM" id="CLU_032354_1_2_10"/>
<dbReference type="OrthoDB" id="9805030at2"/>
<dbReference type="UniPathway" id="UPA00588">
    <property type="reaction ID" value="UER00649"/>
</dbReference>
<dbReference type="Proteomes" id="UP000001208">
    <property type="component" value="Chromosome"/>
</dbReference>
<dbReference type="GO" id="GO:0005737">
    <property type="term" value="C:cytoplasm"/>
    <property type="evidence" value="ECO:0007669"/>
    <property type="project" value="UniProtKB-SubCell"/>
</dbReference>
<dbReference type="GO" id="GO:0004017">
    <property type="term" value="F:adenylate kinase activity"/>
    <property type="evidence" value="ECO:0007669"/>
    <property type="project" value="UniProtKB-UniRule"/>
</dbReference>
<dbReference type="GO" id="GO:0005524">
    <property type="term" value="F:ATP binding"/>
    <property type="evidence" value="ECO:0007669"/>
    <property type="project" value="UniProtKB-UniRule"/>
</dbReference>
<dbReference type="GO" id="GO:0044209">
    <property type="term" value="P:AMP salvage"/>
    <property type="evidence" value="ECO:0007669"/>
    <property type="project" value="UniProtKB-UniRule"/>
</dbReference>
<dbReference type="CDD" id="cd01428">
    <property type="entry name" value="ADK"/>
    <property type="match status" value="1"/>
</dbReference>
<dbReference type="FunFam" id="3.40.50.300:FF:000106">
    <property type="entry name" value="Adenylate kinase mitochondrial"/>
    <property type="match status" value="1"/>
</dbReference>
<dbReference type="Gene3D" id="3.40.50.300">
    <property type="entry name" value="P-loop containing nucleotide triphosphate hydrolases"/>
    <property type="match status" value="1"/>
</dbReference>
<dbReference type="HAMAP" id="MF_00235">
    <property type="entry name" value="Adenylate_kinase_Adk"/>
    <property type="match status" value="1"/>
</dbReference>
<dbReference type="InterPro" id="IPR006259">
    <property type="entry name" value="Adenyl_kin_sub"/>
</dbReference>
<dbReference type="InterPro" id="IPR000850">
    <property type="entry name" value="Adenylat/UMP-CMP_kin"/>
</dbReference>
<dbReference type="InterPro" id="IPR033690">
    <property type="entry name" value="Adenylat_kinase_CS"/>
</dbReference>
<dbReference type="InterPro" id="IPR007862">
    <property type="entry name" value="Adenylate_kinase_lid-dom"/>
</dbReference>
<dbReference type="InterPro" id="IPR027417">
    <property type="entry name" value="P-loop_NTPase"/>
</dbReference>
<dbReference type="NCBIfam" id="TIGR01351">
    <property type="entry name" value="adk"/>
    <property type="match status" value="1"/>
</dbReference>
<dbReference type="NCBIfam" id="NF001380">
    <property type="entry name" value="PRK00279.1-2"/>
    <property type="match status" value="1"/>
</dbReference>
<dbReference type="NCBIfam" id="NF001381">
    <property type="entry name" value="PRK00279.1-3"/>
    <property type="match status" value="1"/>
</dbReference>
<dbReference type="NCBIfam" id="NF011100">
    <property type="entry name" value="PRK14527.1"/>
    <property type="match status" value="1"/>
</dbReference>
<dbReference type="PANTHER" id="PTHR23359">
    <property type="entry name" value="NUCLEOTIDE KINASE"/>
    <property type="match status" value="1"/>
</dbReference>
<dbReference type="Pfam" id="PF00406">
    <property type="entry name" value="ADK"/>
    <property type="match status" value="1"/>
</dbReference>
<dbReference type="Pfam" id="PF05191">
    <property type="entry name" value="ADK_lid"/>
    <property type="match status" value="1"/>
</dbReference>
<dbReference type="PRINTS" id="PR00094">
    <property type="entry name" value="ADENYLTKNASE"/>
</dbReference>
<dbReference type="SUPFAM" id="SSF52540">
    <property type="entry name" value="P-loop containing nucleoside triphosphate hydrolases"/>
    <property type="match status" value="1"/>
</dbReference>
<dbReference type="PROSITE" id="PS00113">
    <property type="entry name" value="ADENYLATE_KINASE"/>
    <property type="match status" value="1"/>
</dbReference>
<gene>
    <name evidence="1" type="primary">adk</name>
    <name type="ordered locus">Ctha_1527</name>
</gene>
<proteinExistence type="inferred from homology"/>
<sequence>MKIILFGPPGVGKGTQAKILSEKHQLAHISTGDMLRSAIKQGTELGLKAKSFIDKGELVPDDVIIGMIEEYVSVQENREQGFILDGFPRTVPQAEALDRLLQKYEIPIDCVISLTADAEEIVARLSGRRIAPSTGKVYHVVYNPPKVEGKCDETGEDLIIREDDKEETIRKRLSIYDQTTAPVLDYYKKKGTAAEVDGTQSIDKVSKEIDEILTSATK</sequence>
<evidence type="ECO:0000255" key="1">
    <source>
        <dbReference type="HAMAP-Rule" id="MF_00235"/>
    </source>
</evidence>
<protein>
    <recommendedName>
        <fullName evidence="1">Adenylate kinase</fullName>
        <shortName evidence="1">AK</shortName>
        <ecNumber evidence="1">2.7.4.3</ecNumber>
    </recommendedName>
    <alternativeName>
        <fullName evidence="1">ATP-AMP transphosphorylase</fullName>
    </alternativeName>
    <alternativeName>
        <fullName evidence="1">ATP:AMP phosphotransferase</fullName>
    </alternativeName>
    <alternativeName>
        <fullName evidence="1">Adenylate monophosphate kinase</fullName>
    </alternativeName>
</protein>
<comment type="function">
    <text evidence="1">Catalyzes the reversible transfer of the terminal phosphate group between ATP and AMP. Plays an important role in cellular energy homeostasis and in adenine nucleotide metabolism.</text>
</comment>
<comment type="catalytic activity">
    <reaction evidence="1">
        <text>AMP + ATP = 2 ADP</text>
        <dbReference type="Rhea" id="RHEA:12973"/>
        <dbReference type="ChEBI" id="CHEBI:30616"/>
        <dbReference type="ChEBI" id="CHEBI:456215"/>
        <dbReference type="ChEBI" id="CHEBI:456216"/>
        <dbReference type="EC" id="2.7.4.3"/>
    </reaction>
</comment>
<comment type="pathway">
    <text evidence="1">Purine metabolism; AMP biosynthesis via salvage pathway; AMP from ADP: step 1/1.</text>
</comment>
<comment type="subunit">
    <text evidence="1">Monomer.</text>
</comment>
<comment type="subcellular location">
    <subcellularLocation>
        <location evidence="1">Cytoplasm</location>
    </subcellularLocation>
</comment>
<comment type="domain">
    <text evidence="1">Consists of three domains, a large central CORE domain and two small peripheral domains, NMPbind and LID, which undergo movements during catalysis. The LID domain closes over the site of phosphoryl transfer upon ATP binding. Assembling and dissambling the active center during each catalytic cycle provides an effective means to prevent ATP hydrolysis.</text>
</comment>
<comment type="similarity">
    <text evidence="1">Belongs to the adenylate kinase family.</text>
</comment>
<accession>B3QS41</accession>
<organism>
    <name type="scientific">Chloroherpeton thalassium (strain ATCC 35110 / GB-78)</name>
    <dbReference type="NCBI Taxonomy" id="517418"/>
    <lineage>
        <taxon>Bacteria</taxon>
        <taxon>Pseudomonadati</taxon>
        <taxon>Chlorobiota</taxon>
        <taxon>Chlorobiia</taxon>
        <taxon>Chlorobiales</taxon>
        <taxon>Chloroherpetonaceae</taxon>
        <taxon>Chloroherpeton</taxon>
    </lineage>
</organism>
<name>KAD_CHLT3</name>
<feature type="chain" id="PRO_1000100546" description="Adenylate kinase">
    <location>
        <begin position="1"/>
        <end position="218"/>
    </location>
</feature>
<feature type="region of interest" description="NMP" evidence="1">
    <location>
        <begin position="30"/>
        <end position="59"/>
    </location>
</feature>
<feature type="region of interest" description="LID" evidence="1">
    <location>
        <begin position="127"/>
        <end position="164"/>
    </location>
</feature>
<feature type="binding site" evidence="1">
    <location>
        <begin position="10"/>
        <end position="15"/>
    </location>
    <ligand>
        <name>ATP</name>
        <dbReference type="ChEBI" id="CHEBI:30616"/>
    </ligand>
</feature>
<feature type="binding site" evidence="1">
    <location>
        <position position="31"/>
    </location>
    <ligand>
        <name>AMP</name>
        <dbReference type="ChEBI" id="CHEBI:456215"/>
    </ligand>
</feature>
<feature type="binding site" evidence="1">
    <location>
        <position position="36"/>
    </location>
    <ligand>
        <name>AMP</name>
        <dbReference type="ChEBI" id="CHEBI:456215"/>
    </ligand>
</feature>
<feature type="binding site" evidence="1">
    <location>
        <begin position="57"/>
        <end position="59"/>
    </location>
    <ligand>
        <name>AMP</name>
        <dbReference type="ChEBI" id="CHEBI:456215"/>
    </ligand>
</feature>
<feature type="binding site" evidence="1">
    <location>
        <begin position="86"/>
        <end position="89"/>
    </location>
    <ligand>
        <name>AMP</name>
        <dbReference type="ChEBI" id="CHEBI:456215"/>
    </ligand>
</feature>
<feature type="binding site" evidence="1">
    <location>
        <position position="93"/>
    </location>
    <ligand>
        <name>AMP</name>
        <dbReference type="ChEBI" id="CHEBI:456215"/>
    </ligand>
</feature>
<feature type="binding site" evidence="1">
    <location>
        <position position="128"/>
    </location>
    <ligand>
        <name>ATP</name>
        <dbReference type="ChEBI" id="CHEBI:30616"/>
    </ligand>
</feature>
<feature type="binding site" evidence="1">
    <location>
        <begin position="137"/>
        <end position="138"/>
    </location>
    <ligand>
        <name>ATP</name>
        <dbReference type="ChEBI" id="CHEBI:30616"/>
    </ligand>
</feature>
<feature type="binding site" evidence="1">
    <location>
        <position position="161"/>
    </location>
    <ligand>
        <name>AMP</name>
        <dbReference type="ChEBI" id="CHEBI:456215"/>
    </ligand>
</feature>
<feature type="binding site" evidence="1">
    <location>
        <position position="172"/>
    </location>
    <ligand>
        <name>AMP</name>
        <dbReference type="ChEBI" id="CHEBI:456215"/>
    </ligand>
</feature>
<feature type="binding site" evidence="1">
    <location>
        <position position="200"/>
    </location>
    <ligand>
        <name>ATP</name>
        <dbReference type="ChEBI" id="CHEBI:30616"/>
    </ligand>
</feature>
<keyword id="KW-0067">ATP-binding</keyword>
<keyword id="KW-0963">Cytoplasm</keyword>
<keyword id="KW-0418">Kinase</keyword>
<keyword id="KW-0545">Nucleotide biosynthesis</keyword>
<keyword id="KW-0547">Nucleotide-binding</keyword>
<keyword id="KW-1185">Reference proteome</keyword>
<keyword id="KW-0808">Transferase</keyword>